<accession>Q96495</accession>
<feature type="chain" id="PRO_0000058084" description="Protein ORM1">
    <location>
        <begin position="1"/>
        <end position="148"/>
    </location>
</feature>
<feature type="transmembrane region" description="Helical" evidence="1">
    <location>
        <begin position="12"/>
        <end position="32"/>
    </location>
</feature>
<feature type="transmembrane region" description="Helical" evidence="1">
    <location>
        <begin position="36"/>
        <end position="56"/>
    </location>
</feature>
<feature type="transmembrane region" description="Helical" evidence="1">
    <location>
        <begin position="89"/>
        <end position="109"/>
    </location>
</feature>
<feature type="transmembrane region" description="Helical" evidence="1">
    <location>
        <begin position="111"/>
        <end position="131"/>
    </location>
</feature>
<organism>
    <name type="scientific">Saccharomyces pastorianus (strain ATCC 76670 / Carlsberg bottom yeast no.2 / CBS 1503 / CLIB 180 / NBRC 10610 / NRRL Y-1525)</name>
    <name type="common">Saaz-type lager yeast</name>
    <name type="synonym">Saccharomyces monacensis</name>
    <dbReference type="NCBI Taxonomy" id="1429090"/>
    <lineage>
        <taxon>Eukaryota</taxon>
        <taxon>Fungi</taxon>
        <taxon>Dikarya</taxon>
        <taxon>Ascomycota</taxon>
        <taxon>Saccharomycotina</taxon>
        <taxon>Saccharomycetes</taxon>
        <taxon>Saccharomycetales</taxon>
        <taxon>Saccharomycetaceae</taxon>
        <taxon>Saccharomyces</taxon>
    </lineage>
</organism>
<evidence type="ECO:0000255" key="1"/>
<evidence type="ECO:0000305" key="2"/>
<keyword id="KW-0472">Membrane</keyword>
<keyword id="KW-0812">Transmembrane</keyword>
<keyword id="KW-1133">Transmembrane helix</keyword>
<gene>
    <name type="primary">ORM1</name>
</gene>
<sequence length="148" mass="17005">MNATWVDQRGAWIIHVVVITLLKLFFNLFPGVTAEWSWTLTNMTYVVGSYVMFHLIKGTPFDFNGGAYDNLTMWEQIDDETLFTPSRKFLIIVPIALFLVSTHYAHYDLKMFSWNCFLTTFVAVVPKLPVTHRLRISIPGITGRAQIS</sequence>
<comment type="subcellular location">
    <subcellularLocation>
        <location evidence="2">Membrane</location>
        <topology evidence="2">Multi-pass membrane protein</topology>
    </subcellularLocation>
</comment>
<comment type="similarity">
    <text evidence="2">To yeast YLR350W C-terminus.</text>
</comment>
<reference key="1">
    <citation type="journal article" date="1997" name="Yeast">
        <title>Saccharomyces carlsbergensis contains two functional genes encoding the acyl-CoA binding protein, one similar to the ACB1 gene from S. cerevisiae and one identical to the ACB1 gene from S. monacensis.</title>
        <authorList>
            <person name="Borsting C."/>
            <person name="Hummel R."/>
            <person name="Schultz E.R."/>
            <person name="Rose T.M."/>
            <person name="Pedersen M.B."/>
            <person name="Knudsen J."/>
            <person name="Kristiansen K."/>
        </authorList>
    </citation>
    <scope>NUCLEOTIDE SEQUENCE [GENOMIC DNA]</scope>
    <source>
        <strain>ATCC 76670 / Carlsberg bottom yeast no.2 / CBS 1503 / CLIB 180 / NBRC 10610 / NRRL Y-1525</strain>
    </source>
</reference>
<name>ORM1_SACMO</name>
<dbReference type="EMBL" id="Y08688">
    <property type="protein sequence ID" value="CAA69945.1"/>
    <property type="molecule type" value="Genomic_DNA"/>
</dbReference>
<dbReference type="SMR" id="Q96495"/>
<dbReference type="GO" id="GO:0005789">
    <property type="term" value="C:endoplasmic reticulum membrane"/>
    <property type="evidence" value="ECO:0007669"/>
    <property type="project" value="InterPro"/>
</dbReference>
<dbReference type="InterPro" id="IPR007203">
    <property type="entry name" value="ORMDL"/>
</dbReference>
<dbReference type="PANTHER" id="PTHR12665">
    <property type="entry name" value="ORMDL PROTEINS"/>
    <property type="match status" value="1"/>
</dbReference>
<dbReference type="Pfam" id="PF04061">
    <property type="entry name" value="ORMDL"/>
    <property type="match status" value="1"/>
</dbReference>
<dbReference type="PIRSF" id="PIRSF018147">
    <property type="entry name" value="ORMDL"/>
    <property type="match status" value="1"/>
</dbReference>
<protein>
    <recommendedName>
        <fullName>Protein ORM1</fullName>
    </recommendedName>
</protein>
<proteinExistence type="predicted"/>